<evidence type="ECO:0000255" key="1">
    <source>
        <dbReference type="HAMAP-Rule" id="MF_00537"/>
    </source>
</evidence>
<evidence type="ECO:0000305" key="2"/>
<keyword id="KW-0687">Ribonucleoprotein</keyword>
<keyword id="KW-0689">Ribosomal protein</keyword>
<keyword id="KW-0694">RNA-binding</keyword>
<keyword id="KW-0699">rRNA-binding</keyword>
<proteinExistence type="inferred from homology"/>
<comment type="function">
    <text evidence="1">Binds 16S rRNA, required for the assembly of 30S particles and may also be responsible for determining the conformation of the 16S rRNA at the A site.</text>
</comment>
<comment type="subunit">
    <text evidence="1">Part of the 30S ribosomal subunit. Contacts proteins S3 and S10.</text>
</comment>
<comment type="similarity">
    <text evidence="1">Belongs to the universal ribosomal protein uS14 family.</text>
</comment>
<dbReference type="EMBL" id="CP001127">
    <property type="protein sequence ID" value="ACF88981.1"/>
    <property type="molecule type" value="Genomic_DNA"/>
</dbReference>
<dbReference type="RefSeq" id="WP_001118932.1">
    <property type="nucleotide sequence ID" value="NC_011094.1"/>
</dbReference>
<dbReference type="SMR" id="B4TXC9"/>
<dbReference type="GeneID" id="66757762"/>
<dbReference type="KEGG" id="sew:SeSA_A3623"/>
<dbReference type="HOGENOM" id="CLU_139869_0_1_6"/>
<dbReference type="Proteomes" id="UP000001865">
    <property type="component" value="Chromosome"/>
</dbReference>
<dbReference type="GO" id="GO:0005737">
    <property type="term" value="C:cytoplasm"/>
    <property type="evidence" value="ECO:0007669"/>
    <property type="project" value="UniProtKB-ARBA"/>
</dbReference>
<dbReference type="GO" id="GO:0015935">
    <property type="term" value="C:small ribosomal subunit"/>
    <property type="evidence" value="ECO:0007669"/>
    <property type="project" value="TreeGrafter"/>
</dbReference>
<dbReference type="GO" id="GO:0019843">
    <property type="term" value="F:rRNA binding"/>
    <property type="evidence" value="ECO:0007669"/>
    <property type="project" value="UniProtKB-UniRule"/>
</dbReference>
<dbReference type="GO" id="GO:0003735">
    <property type="term" value="F:structural constituent of ribosome"/>
    <property type="evidence" value="ECO:0007669"/>
    <property type="project" value="InterPro"/>
</dbReference>
<dbReference type="GO" id="GO:0006412">
    <property type="term" value="P:translation"/>
    <property type="evidence" value="ECO:0007669"/>
    <property type="project" value="UniProtKB-UniRule"/>
</dbReference>
<dbReference type="FunFam" id="1.10.287.1480:FF:000001">
    <property type="entry name" value="30S ribosomal protein S14"/>
    <property type="match status" value="1"/>
</dbReference>
<dbReference type="Gene3D" id="1.10.287.1480">
    <property type="match status" value="1"/>
</dbReference>
<dbReference type="HAMAP" id="MF_00537">
    <property type="entry name" value="Ribosomal_uS14_1"/>
    <property type="match status" value="1"/>
</dbReference>
<dbReference type="InterPro" id="IPR001209">
    <property type="entry name" value="Ribosomal_uS14"/>
</dbReference>
<dbReference type="InterPro" id="IPR023036">
    <property type="entry name" value="Ribosomal_uS14_bac/plastid"/>
</dbReference>
<dbReference type="InterPro" id="IPR018271">
    <property type="entry name" value="Ribosomal_uS14_CS"/>
</dbReference>
<dbReference type="NCBIfam" id="NF006477">
    <property type="entry name" value="PRK08881.1"/>
    <property type="match status" value="1"/>
</dbReference>
<dbReference type="PANTHER" id="PTHR19836">
    <property type="entry name" value="30S RIBOSOMAL PROTEIN S14"/>
    <property type="match status" value="1"/>
</dbReference>
<dbReference type="PANTHER" id="PTHR19836:SF19">
    <property type="entry name" value="SMALL RIBOSOMAL SUBUNIT PROTEIN US14M"/>
    <property type="match status" value="1"/>
</dbReference>
<dbReference type="Pfam" id="PF00253">
    <property type="entry name" value="Ribosomal_S14"/>
    <property type="match status" value="1"/>
</dbReference>
<dbReference type="SUPFAM" id="SSF57716">
    <property type="entry name" value="Glucocorticoid receptor-like (DNA-binding domain)"/>
    <property type="match status" value="1"/>
</dbReference>
<dbReference type="PROSITE" id="PS00527">
    <property type="entry name" value="RIBOSOMAL_S14"/>
    <property type="match status" value="1"/>
</dbReference>
<gene>
    <name evidence="1" type="primary">rpsN</name>
    <name type="ordered locus">SeSA_A3623</name>
</gene>
<sequence length="101" mass="11609">MAKQSMKAREVKRVALADKYFAKRAELKAIISDVNATDEDRWNAVLKLQTLPRDSSPSRQRNRCRQTGRPHAFLRKFGLSRIKVREAAMRGEIPGLKKASW</sequence>
<name>RS14_SALSV</name>
<organism>
    <name type="scientific">Salmonella schwarzengrund (strain CVM19633)</name>
    <dbReference type="NCBI Taxonomy" id="439843"/>
    <lineage>
        <taxon>Bacteria</taxon>
        <taxon>Pseudomonadati</taxon>
        <taxon>Pseudomonadota</taxon>
        <taxon>Gammaproteobacteria</taxon>
        <taxon>Enterobacterales</taxon>
        <taxon>Enterobacteriaceae</taxon>
        <taxon>Salmonella</taxon>
    </lineage>
</organism>
<feature type="chain" id="PRO_1000128566" description="Small ribosomal subunit protein uS14">
    <location>
        <begin position="1"/>
        <end position="101"/>
    </location>
</feature>
<reference key="1">
    <citation type="journal article" date="2011" name="J. Bacteriol.">
        <title>Comparative genomics of 28 Salmonella enterica isolates: evidence for CRISPR-mediated adaptive sublineage evolution.</title>
        <authorList>
            <person name="Fricke W.F."/>
            <person name="Mammel M.K."/>
            <person name="McDermott P.F."/>
            <person name="Tartera C."/>
            <person name="White D.G."/>
            <person name="Leclerc J.E."/>
            <person name="Ravel J."/>
            <person name="Cebula T.A."/>
        </authorList>
    </citation>
    <scope>NUCLEOTIDE SEQUENCE [LARGE SCALE GENOMIC DNA]</scope>
    <source>
        <strain>CVM19633</strain>
    </source>
</reference>
<protein>
    <recommendedName>
        <fullName evidence="1">Small ribosomal subunit protein uS14</fullName>
    </recommendedName>
    <alternativeName>
        <fullName evidence="2">30S ribosomal protein S14</fullName>
    </alternativeName>
</protein>
<accession>B4TXC9</accession>